<sequence length="256" mass="29862">MFKKLINKKNTINNYNEELDSSNIPEHIAIIMDGNGRWAKKRKMPRIKGHYEGMQTIKKITRIASDIGVKYLTLYAFSTENWSRPESEVNYIMNLPVNFLKTFLPELIEKNVKVETIGFTDKLPKSTIEAINNAKEKTANNTGLKLIFAINYGGRAELVHSIKNMFDELHQQGLNSDIIDETYINNHLMTKDYPDPELLIRTSGEQRISNFLIWQVSYSEFIFNQKLWPDFDEDELIKCIKIYQSRQRRFGGLSEE</sequence>
<accession>P60477</accession>
<accession>Q99UL2</accession>
<protein>
    <recommendedName>
        <fullName evidence="1">Isoprenyl transferase</fullName>
        <ecNumber evidence="1">2.5.1.-</ecNumber>
    </recommendedName>
</protein>
<organism>
    <name type="scientific">Staphylococcus aureus (strain N315)</name>
    <dbReference type="NCBI Taxonomy" id="158879"/>
    <lineage>
        <taxon>Bacteria</taxon>
        <taxon>Bacillati</taxon>
        <taxon>Bacillota</taxon>
        <taxon>Bacilli</taxon>
        <taxon>Bacillales</taxon>
        <taxon>Staphylococcaceae</taxon>
        <taxon>Staphylococcus</taxon>
    </lineage>
</organism>
<reference key="1">
    <citation type="journal article" date="2001" name="Lancet">
        <title>Whole genome sequencing of meticillin-resistant Staphylococcus aureus.</title>
        <authorList>
            <person name="Kuroda M."/>
            <person name="Ohta T."/>
            <person name="Uchiyama I."/>
            <person name="Baba T."/>
            <person name="Yuzawa H."/>
            <person name="Kobayashi I."/>
            <person name="Cui L."/>
            <person name="Oguchi A."/>
            <person name="Aoki K."/>
            <person name="Nagai Y."/>
            <person name="Lian J.-Q."/>
            <person name="Ito T."/>
            <person name="Kanamori M."/>
            <person name="Matsumaru H."/>
            <person name="Maruyama A."/>
            <person name="Murakami H."/>
            <person name="Hosoyama A."/>
            <person name="Mizutani-Ui Y."/>
            <person name="Takahashi N.K."/>
            <person name="Sawano T."/>
            <person name="Inoue R."/>
            <person name="Kaito C."/>
            <person name="Sekimizu K."/>
            <person name="Hirakawa H."/>
            <person name="Kuhara S."/>
            <person name="Goto S."/>
            <person name="Yabuzaki J."/>
            <person name="Kanehisa M."/>
            <person name="Yamashita A."/>
            <person name="Oshima K."/>
            <person name="Furuya K."/>
            <person name="Yoshino C."/>
            <person name="Shiba T."/>
            <person name="Hattori M."/>
            <person name="Ogasawara N."/>
            <person name="Hayashi H."/>
            <person name="Hiramatsu K."/>
        </authorList>
    </citation>
    <scope>NUCLEOTIDE SEQUENCE [LARGE SCALE GENOMIC DNA]</scope>
    <source>
        <strain>N315</strain>
    </source>
</reference>
<name>ISPT_STAAN</name>
<dbReference type="EC" id="2.5.1.-" evidence="1"/>
<dbReference type="EMBL" id="BA000018">
    <property type="protein sequence ID" value="BAB42355.1"/>
    <property type="molecule type" value="Genomic_DNA"/>
</dbReference>
<dbReference type="PIR" id="G89899">
    <property type="entry name" value="G89899"/>
</dbReference>
<dbReference type="RefSeq" id="WP_000473699.1">
    <property type="nucleotide sequence ID" value="NC_002745.2"/>
</dbReference>
<dbReference type="PDB" id="4H8E">
    <property type="method" value="X-ray"/>
    <property type="resolution" value="1.30 A"/>
    <property type="chains" value="A=1-256"/>
</dbReference>
<dbReference type="PDB" id="4U82">
    <property type="method" value="X-ray"/>
    <property type="resolution" value="1.66 A"/>
    <property type="chains" value="A=1-256"/>
</dbReference>
<dbReference type="PDBsum" id="4H8E"/>
<dbReference type="PDBsum" id="4U82"/>
<dbReference type="SMR" id="P60477"/>
<dbReference type="EnsemblBacteria" id="BAB42355">
    <property type="protein sequence ID" value="BAB42355"/>
    <property type="gene ID" value="BAB42355"/>
</dbReference>
<dbReference type="KEGG" id="sau:SA1103"/>
<dbReference type="HOGENOM" id="CLU_038505_1_1_9"/>
<dbReference type="EvolutionaryTrace" id="P60477"/>
<dbReference type="GO" id="GO:0005829">
    <property type="term" value="C:cytosol"/>
    <property type="evidence" value="ECO:0007669"/>
    <property type="project" value="TreeGrafter"/>
</dbReference>
<dbReference type="GO" id="GO:0008834">
    <property type="term" value="F:ditrans,polycis-undecaprenyl-diphosphate synthase [(2E,6E)-farnesyl-diphosphate specific] activity"/>
    <property type="evidence" value="ECO:0007669"/>
    <property type="project" value="TreeGrafter"/>
</dbReference>
<dbReference type="GO" id="GO:0000287">
    <property type="term" value="F:magnesium ion binding"/>
    <property type="evidence" value="ECO:0007669"/>
    <property type="project" value="UniProtKB-UniRule"/>
</dbReference>
<dbReference type="GO" id="GO:0030145">
    <property type="term" value="F:manganese ion binding"/>
    <property type="evidence" value="ECO:0007669"/>
    <property type="project" value="TreeGrafter"/>
</dbReference>
<dbReference type="GO" id="GO:0016094">
    <property type="term" value="P:polyprenol biosynthetic process"/>
    <property type="evidence" value="ECO:0007669"/>
    <property type="project" value="TreeGrafter"/>
</dbReference>
<dbReference type="CDD" id="cd00475">
    <property type="entry name" value="Cis_IPPS"/>
    <property type="match status" value="1"/>
</dbReference>
<dbReference type="FunFam" id="3.40.1180.10:FF:000001">
    <property type="entry name" value="(2E,6E)-farnesyl-diphosphate-specific ditrans,polycis-undecaprenyl-diphosphate synthase"/>
    <property type="match status" value="1"/>
</dbReference>
<dbReference type="Gene3D" id="3.40.1180.10">
    <property type="entry name" value="Decaprenyl diphosphate synthase-like"/>
    <property type="match status" value="1"/>
</dbReference>
<dbReference type="HAMAP" id="MF_01139">
    <property type="entry name" value="ISPT"/>
    <property type="match status" value="1"/>
</dbReference>
<dbReference type="InterPro" id="IPR001441">
    <property type="entry name" value="UPP_synth-like"/>
</dbReference>
<dbReference type="InterPro" id="IPR018520">
    <property type="entry name" value="UPP_synth-like_CS"/>
</dbReference>
<dbReference type="InterPro" id="IPR036424">
    <property type="entry name" value="UPP_synth-like_sf"/>
</dbReference>
<dbReference type="NCBIfam" id="NF011405">
    <property type="entry name" value="PRK14830.1"/>
    <property type="match status" value="1"/>
</dbReference>
<dbReference type="NCBIfam" id="TIGR00055">
    <property type="entry name" value="uppS"/>
    <property type="match status" value="1"/>
</dbReference>
<dbReference type="PANTHER" id="PTHR10291:SF0">
    <property type="entry name" value="DEHYDRODOLICHYL DIPHOSPHATE SYNTHASE 2"/>
    <property type="match status" value="1"/>
</dbReference>
<dbReference type="PANTHER" id="PTHR10291">
    <property type="entry name" value="DEHYDRODOLICHYL DIPHOSPHATE SYNTHASE FAMILY MEMBER"/>
    <property type="match status" value="1"/>
</dbReference>
<dbReference type="Pfam" id="PF01255">
    <property type="entry name" value="Prenyltransf"/>
    <property type="match status" value="1"/>
</dbReference>
<dbReference type="SUPFAM" id="SSF64005">
    <property type="entry name" value="Undecaprenyl diphosphate synthase"/>
    <property type="match status" value="1"/>
</dbReference>
<dbReference type="PROSITE" id="PS01066">
    <property type="entry name" value="UPP_SYNTHASE"/>
    <property type="match status" value="1"/>
</dbReference>
<comment type="function">
    <text evidence="1">Catalyzes the condensation of isopentenyl diphosphate (IPP) with allylic pyrophosphates generating different type of terpenoids.</text>
</comment>
<comment type="cofactor">
    <cofactor evidence="1">
        <name>Mg(2+)</name>
        <dbReference type="ChEBI" id="CHEBI:18420"/>
    </cofactor>
    <text evidence="1">Binds 2 magnesium ions per subunit.</text>
</comment>
<comment type="subunit">
    <text evidence="1">Homodimer.</text>
</comment>
<comment type="similarity">
    <text evidence="1">Belongs to the UPP synthase family.</text>
</comment>
<feature type="chain" id="PRO_0000123673" description="Isoprenyl transferase">
    <location>
        <begin position="1"/>
        <end position="256"/>
    </location>
</feature>
<feature type="active site" evidence="1">
    <location>
        <position position="33"/>
    </location>
</feature>
<feature type="active site" description="Proton acceptor" evidence="1">
    <location>
        <position position="81"/>
    </location>
</feature>
<feature type="binding site" evidence="1">
    <location>
        <position position="33"/>
    </location>
    <ligand>
        <name>Mg(2+)</name>
        <dbReference type="ChEBI" id="CHEBI:18420"/>
    </ligand>
</feature>
<feature type="binding site" evidence="1">
    <location>
        <begin position="34"/>
        <end position="37"/>
    </location>
    <ligand>
        <name>substrate</name>
    </ligand>
</feature>
<feature type="binding site" evidence="1">
    <location>
        <position position="38"/>
    </location>
    <ligand>
        <name>substrate</name>
    </ligand>
</feature>
<feature type="binding site" evidence="1">
    <location>
        <position position="46"/>
    </location>
    <ligand>
        <name>substrate</name>
    </ligand>
</feature>
<feature type="binding site" evidence="1">
    <location>
        <position position="50"/>
    </location>
    <ligand>
        <name>substrate</name>
    </ligand>
</feature>
<feature type="binding site" evidence="1">
    <location>
        <begin position="78"/>
        <end position="80"/>
    </location>
    <ligand>
        <name>substrate</name>
    </ligand>
</feature>
<feature type="binding site" evidence="1">
    <location>
        <position position="82"/>
    </location>
    <ligand>
        <name>substrate</name>
    </ligand>
</feature>
<feature type="binding site" evidence="1">
    <location>
        <position position="84"/>
    </location>
    <ligand>
        <name>substrate</name>
    </ligand>
</feature>
<feature type="binding site" evidence="1">
    <location>
        <position position="201"/>
    </location>
    <ligand>
        <name>substrate</name>
    </ligand>
</feature>
<feature type="binding site" evidence="1">
    <location>
        <begin position="207"/>
        <end position="209"/>
    </location>
    <ligand>
        <name>substrate</name>
    </ligand>
</feature>
<feature type="binding site" evidence="1">
    <location>
        <position position="220"/>
    </location>
    <ligand>
        <name>Mg(2+)</name>
        <dbReference type="ChEBI" id="CHEBI:18420"/>
    </ligand>
</feature>
<feature type="strand" evidence="2">
    <location>
        <begin position="26"/>
        <end position="31"/>
    </location>
</feature>
<feature type="helix" evidence="2">
    <location>
        <begin position="35"/>
        <end position="41"/>
    </location>
</feature>
<feature type="helix" evidence="2">
    <location>
        <begin position="46"/>
        <end position="67"/>
    </location>
</feature>
<feature type="strand" evidence="2">
    <location>
        <begin position="70"/>
        <end position="78"/>
    </location>
</feature>
<feature type="helix" evidence="2">
    <location>
        <begin position="81"/>
        <end position="83"/>
    </location>
</feature>
<feature type="helix" evidence="2">
    <location>
        <begin position="86"/>
        <end position="109"/>
    </location>
</feature>
<feature type="strand" evidence="2">
    <location>
        <begin position="113"/>
        <end position="118"/>
    </location>
</feature>
<feature type="helix" evidence="2">
    <location>
        <begin position="120"/>
        <end position="122"/>
    </location>
</feature>
<feature type="helix" evidence="2">
    <location>
        <begin position="125"/>
        <end position="137"/>
    </location>
</feature>
<feature type="turn" evidence="2">
    <location>
        <begin position="138"/>
        <end position="140"/>
    </location>
</feature>
<feature type="strand" evidence="2">
    <location>
        <begin position="145"/>
        <end position="152"/>
    </location>
</feature>
<feature type="helix" evidence="2">
    <location>
        <begin position="154"/>
        <end position="171"/>
    </location>
</feature>
<feature type="helix" evidence="2">
    <location>
        <begin position="176"/>
        <end position="178"/>
    </location>
</feature>
<feature type="helix" evidence="2">
    <location>
        <begin position="181"/>
        <end position="185"/>
    </location>
</feature>
<feature type="turn" evidence="2">
    <location>
        <begin position="189"/>
        <end position="192"/>
    </location>
</feature>
<feature type="strand" evidence="2">
    <location>
        <begin position="197"/>
        <end position="201"/>
    </location>
</feature>
<feature type="turn" evidence="2">
    <location>
        <begin position="213"/>
        <end position="218"/>
    </location>
</feature>
<feature type="strand" evidence="2">
    <location>
        <begin position="220"/>
        <end position="223"/>
    </location>
</feature>
<feature type="helix" evidence="2">
    <location>
        <begin position="228"/>
        <end position="230"/>
    </location>
</feature>
<feature type="helix" evidence="2">
    <location>
        <begin position="233"/>
        <end position="245"/>
    </location>
</feature>
<gene>
    <name evidence="1" type="primary">uppS</name>
    <name type="ordered locus">SA1103</name>
</gene>
<evidence type="ECO:0000255" key="1">
    <source>
        <dbReference type="HAMAP-Rule" id="MF_01139"/>
    </source>
</evidence>
<evidence type="ECO:0007829" key="2">
    <source>
        <dbReference type="PDB" id="4H8E"/>
    </source>
</evidence>
<proteinExistence type="evidence at protein level"/>
<keyword id="KW-0002">3D-structure</keyword>
<keyword id="KW-0460">Magnesium</keyword>
<keyword id="KW-0479">Metal-binding</keyword>
<keyword id="KW-0808">Transferase</keyword>